<name>PCKA_AZOPC</name>
<accession>B6YRN4</accession>
<reference key="1">
    <citation type="journal article" date="2008" name="Science">
        <title>Genome of an endosymbiont coupling N2 fixation to cellulolysis within RT protist cells in termite gut.</title>
        <authorList>
            <person name="Hongoh Y."/>
            <person name="Sharma V.K."/>
            <person name="Prakash T."/>
            <person name="Noda S."/>
            <person name="Toh H."/>
            <person name="Taylor T.D."/>
            <person name="Kudo T."/>
            <person name="Sakaki Y."/>
            <person name="Toyoda A."/>
            <person name="Hattori M."/>
            <person name="Ohkuma M."/>
        </authorList>
    </citation>
    <scope>NUCLEOTIDE SEQUENCE [LARGE SCALE GENOMIC DNA]</scope>
</reference>
<evidence type="ECO:0000255" key="1">
    <source>
        <dbReference type="HAMAP-Rule" id="MF_00453"/>
    </source>
</evidence>
<comment type="function">
    <text evidence="1">Involved in the gluconeogenesis. Catalyzes the conversion of oxaloacetate (OAA) to phosphoenolpyruvate (PEP) through direct phosphoryl transfer between the nucleoside triphosphate and OAA.</text>
</comment>
<comment type="catalytic activity">
    <reaction evidence="1">
        <text>oxaloacetate + ATP = phosphoenolpyruvate + ADP + CO2</text>
        <dbReference type="Rhea" id="RHEA:18617"/>
        <dbReference type="ChEBI" id="CHEBI:16452"/>
        <dbReference type="ChEBI" id="CHEBI:16526"/>
        <dbReference type="ChEBI" id="CHEBI:30616"/>
        <dbReference type="ChEBI" id="CHEBI:58702"/>
        <dbReference type="ChEBI" id="CHEBI:456216"/>
        <dbReference type="EC" id="4.1.1.49"/>
    </reaction>
</comment>
<comment type="cofactor">
    <cofactor evidence="1">
        <name>Mn(2+)</name>
        <dbReference type="ChEBI" id="CHEBI:29035"/>
    </cofactor>
    <text evidence="1">Binds 1 Mn(2+) ion per subunit.</text>
</comment>
<comment type="pathway">
    <text evidence="1">Carbohydrate biosynthesis; gluconeogenesis.</text>
</comment>
<comment type="subcellular location">
    <subcellularLocation>
        <location evidence="1">Cytoplasm</location>
    </subcellularLocation>
</comment>
<comment type="similarity">
    <text evidence="1">Belongs to the phosphoenolpyruvate carboxykinase (ATP) family.</text>
</comment>
<sequence length="530" mass="59479">MAKVDLSKYGISNNIIVVYNPSYEDLYKAEINSENKGFEKGIVTNTGAVSVDTGKFTGRSPKDRYIVKDQITENTIWWDGNINKPISRTIWDNLKDLTIKQLNTAKKLYIIDAFCGTNNDTRMKVRFIVEVAWQAHFVTNMFIRPSNYELDHYGDPDFVVFNGSKTTNPKWKEQGLNSEIYILFNLTEKEQIIGGTWYGGEMKKGMFSMQNYYLPLKGIASMHCSANVGEKGDVAVFFGLSGTGKTTLSADPKRYLIGDDEHGWDDNGIFNYEGGCYAKVIDLSQKNEPDIWNAIRRDALLENVTVKADGTLDYSKVASKTENTRVSYPIHHINKIVLPSRAGHAKKIIYLSADAFGVLPPVSVLDEKSSQYHFLCGYTSKLAGTERGITEPIPSFSPAFGEAFLTLHPTQYANVLAKKMKEHNATAYLVNTGWNGTNKRISIQDTRAIIDAIIDESIEKAEKIYIPILNLYVPKSLSGVSKGILDPRDTYTNRGEWEEKAKSLAAKYIKNFEQYLPEGEYLISSGPQLS</sequence>
<proteinExistence type="inferred from homology"/>
<keyword id="KW-0067">ATP-binding</keyword>
<keyword id="KW-0963">Cytoplasm</keyword>
<keyword id="KW-0210">Decarboxylase</keyword>
<keyword id="KW-0312">Gluconeogenesis</keyword>
<keyword id="KW-0456">Lyase</keyword>
<keyword id="KW-0464">Manganese</keyword>
<keyword id="KW-0479">Metal-binding</keyword>
<keyword id="KW-0547">Nucleotide-binding</keyword>
<keyword id="KW-1185">Reference proteome</keyword>
<organism>
    <name type="scientific">Azobacteroides pseudotrichonymphae genomovar. CFP2</name>
    <dbReference type="NCBI Taxonomy" id="511995"/>
    <lineage>
        <taxon>Bacteria</taxon>
        <taxon>Pseudomonadati</taxon>
        <taxon>Bacteroidota</taxon>
        <taxon>Bacteroidia</taxon>
        <taxon>Bacteroidales</taxon>
        <taxon>Candidatus Azobacteroides</taxon>
    </lineage>
</organism>
<feature type="chain" id="PRO_1000125052" description="Phosphoenolpyruvate carboxykinase (ATP)">
    <location>
        <begin position="1"/>
        <end position="530"/>
    </location>
</feature>
<feature type="binding site" evidence="1">
    <location>
        <position position="59"/>
    </location>
    <ligand>
        <name>substrate</name>
    </ligand>
</feature>
<feature type="binding site" evidence="1">
    <location>
        <position position="198"/>
    </location>
    <ligand>
        <name>substrate</name>
    </ligand>
</feature>
<feature type="binding site" evidence="1">
    <location>
        <position position="204"/>
    </location>
    <ligand>
        <name>ATP</name>
        <dbReference type="ChEBI" id="CHEBI:30616"/>
    </ligand>
</feature>
<feature type="binding site" evidence="1">
    <location>
        <position position="204"/>
    </location>
    <ligand>
        <name>Mn(2+)</name>
        <dbReference type="ChEBI" id="CHEBI:29035"/>
    </ligand>
</feature>
<feature type="binding site" evidence="1">
    <location>
        <position position="204"/>
    </location>
    <ligand>
        <name>substrate</name>
    </ligand>
</feature>
<feature type="binding site" evidence="1">
    <location>
        <position position="223"/>
    </location>
    <ligand>
        <name>ATP</name>
        <dbReference type="ChEBI" id="CHEBI:30616"/>
    </ligand>
</feature>
<feature type="binding site" evidence="1">
    <location>
        <position position="223"/>
    </location>
    <ligand>
        <name>Mn(2+)</name>
        <dbReference type="ChEBI" id="CHEBI:29035"/>
    </ligand>
</feature>
<feature type="binding site" evidence="1">
    <location>
        <begin position="239"/>
        <end position="247"/>
    </location>
    <ligand>
        <name>ATP</name>
        <dbReference type="ChEBI" id="CHEBI:30616"/>
    </ligand>
</feature>
<feature type="binding site" evidence="1">
    <location>
        <position position="260"/>
    </location>
    <ligand>
        <name>Mn(2+)</name>
        <dbReference type="ChEBI" id="CHEBI:29035"/>
    </ligand>
</feature>
<feature type="binding site" evidence="1">
    <location>
        <position position="288"/>
    </location>
    <ligand>
        <name>ATP</name>
        <dbReference type="ChEBI" id="CHEBI:30616"/>
    </ligand>
</feature>
<feature type="binding site" evidence="1">
    <location>
        <position position="325"/>
    </location>
    <ligand>
        <name>ATP</name>
        <dbReference type="ChEBI" id="CHEBI:30616"/>
    </ligand>
</feature>
<feature type="binding site" evidence="1">
    <location>
        <position position="325"/>
    </location>
    <ligand>
        <name>substrate</name>
    </ligand>
</feature>
<feature type="binding site" evidence="1">
    <location>
        <begin position="440"/>
        <end position="441"/>
    </location>
    <ligand>
        <name>ATP</name>
        <dbReference type="ChEBI" id="CHEBI:30616"/>
    </ligand>
</feature>
<feature type="binding site" evidence="1">
    <location>
        <position position="446"/>
    </location>
    <ligand>
        <name>ATP</name>
        <dbReference type="ChEBI" id="CHEBI:30616"/>
    </ligand>
</feature>
<gene>
    <name evidence="1" type="primary">pckA</name>
    <name type="ordered locus">CFPG_593</name>
</gene>
<dbReference type="EC" id="4.1.1.49" evidence="1"/>
<dbReference type="EMBL" id="AP010656">
    <property type="protein sequence ID" value="BAG83856.1"/>
    <property type="molecule type" value="Genomic_DNA"/>
</dbReference>
<dbReference type="RefSeq" id="WP_012573616.1">
    <property type="nucleotide sequence ID" value="NC_011565.1"/>
</dbReference>
<dbReference type="SMR" id="B6YRN4"/>
<dbReference type="STRING" id="511995.CFPG_593"/>
<dbReference type="KEGG" id="aps:CFPG_593"/>
<dbReference type="eggNOG" id="COG1866">
    <property type="taxonomic scope" value="Bacteria"/>
</dbReference>
<dbReference type="HOGENOM" id="CLU_018247_0_1_10"/>
<dbReference type="OrthoDB" id="9806325at2"/>
<dbReference type="UniPathway" id="UPA00138"/>
<dbReference type="Proteomes" id="UP000000723">
    <property type="component" value="Chromosome"/>
</dbReference>
<dbReference type="GO" id="GO:0005829">
    <property type="term" value="C:cytosol"/>
    <property type="evidence" value="ECO:0007669"/>
    <property type="project" value="TreeGrafter"/>
</dbReference>
<dbReference type="GO" id="GO:0005524">
    <property type="term" value="F:ATP binding"/>
    <property type="evidence" value="ECO:0007669"/>
    <property type="project" value="UniProtKB-UniRule"/>
</dbReference>
<dbReference type="GO" id="GO:0046872">
    <property type="term" value="F:metal ion binding"/>
    <property type="evidence" value="ECO:0007669"/>
    <property type="project" value="UniProtKB-KW"/>
</dbReference>
<dbReference type="GO" id="GO:0004612">
    <property type="term" value="F:phosphoenolpyruvate carboxykinase (ATP) activity"/>
    <property type="evidence" value="ECO:0007669"/>
    <property type="project" value="UniProtKB-UniRule"/>
</dbReference>
<dbReference type="GO" id="GO:0006094">
    <property type="term" value="P:gluconeogenesis"/>
    <property type="evidence" value="ECO:0007669"/>
    <property type="project" value="UniProtKB-UniRule"/>
</dbReference>
<dbReference type="FunFam" id="3.40.449.10:FF:000001">
    <property type="entry name" value="Phosphoenolpyruvate carboxykinase (ATP)"/>
    <property type="match status" value="1"/>
</dbReference>
<dbReference type="Gene3D" id="3.90.228.20">
    <property type="match status" value="1"/>
</dbReference>
<dbReference type="Gene3D" id="3.40.449.10">
    <property type="entry name" value="Phosphoenolpyruvate Carboxykinase, domain 1"/>
    <property type="match status" value="1"/>
</dbReference>
<dbReference type="Gene3D" id="2.170.8.10">
    <property type="entry name" value="Phosphoenolpyruvate Carboxykinase, domain 2"/>
    <property type="match status" value="1"/>
</dbReference>
<dbReference type="HAMAP" id="MF_00453">
    <property type="entry name" value="PEPCK_ATP"/>
    <property type="match status" value="1"/>
</dbReference>
<dbReference type="InterPro" id="IPR001272">
    <property type="entry name" value="PEP_carboxykinase_ATP"/>
</dbReference>
<dbReference type="InterPro" id="IPR013035">
    <property type="entry name" value="PEP_carboxykinase_C"/>
</dbReference>
<dbReference type="InterPro" id="IPR008210">
    <property type="entry name" value="PEP_carboxykinase_N"/>
</dbReference>
<dbReference type="InterPro" id="IPR015994">
    <property type="entry name" value="PEPCK_ATP_CS"/>
</dbReference>
<dbReference type="NCBIfam" id="TIGR00224">
    <property type="entry name" value="pckA"/>
    <property type="match status" value="1"/>
</dbReference>
<dbReference type="NCBIfam" id="NF006819">
    <property type="entry name" value="PRK09344.1-1"/>
    <property type="match status" value="1"/>
</dbReference>
<dbReference type="NCBIfam" id="NF006820">
    <property type="entry name" value="PRK09344.1-2"/>
    <property type="match status" value="1"/>
</dbReference>
<dbReference type="NCBIfam" id="NF006821">
    <property type="entry name" value="PRK09344.1-3"/>
    <property type="match status" value="1"/>
</dbReference>
<dbReference type="PANTHER" id="PTHR30031:SF0">
    <property type="entry name" value="PHOSPHOENOLPYRUVATE CARBOXYKINASE (ATP)"/>
    <property type="match status" value="1"/>
</dbReference>
<dbReference type="PANTHER" id="PTHR30031">
    <property type="entry name" value="PHOSPHOENOLPYRUVATE CARBOXYKINASE ATP"/>
    <property type="match status" value="1"/>
</dbReference>
<dbReference type="Pfam" id="PF01293">
    <property type="entry name" value="PEPCK_ATP"/>
    <property type="match status" value="1"/>
</dbReference>
<dbReference type="PIRSF" id="PIRSF006294">
    <property type="entry name" value="PEP_crbxkin"/>
    <property type="match status" value="1"/>
</dbReference>
<dbReference type="SUPFAM" id="SSF68923">
    <property type="entry name" value="PEP carboxykinase N-terminal domain"/>
    <property type="match status" value="1"/>
</dbReference>
<dbReference type="SUPFAM" id="SSF53795">
    <property type="entry name" value="PEP carboxykinase-like"/>
    <property type="match status" value="1"/>
</dbReference>
<dbReference type="PROSITE" id="PS00532">
    <property type="entry name" value="PEPCK_ATP"/>
    <property type="match status" value="1"/>
</dbReference>
<protein>
    <recommendedName>
        <fullName evidence="1">Phosphoenolpyruvate carboxykinase (ATP)</fullName>
        <shortName evidence="1">PCK</shortName>
        <shortName evidence="1">PEP carboxykinase</shortName>
        <shortName evidence="1">PEPCK</shortName>
        <ecNumber evidence="1">4.1.1.49</ecNumber>
    </recommendedName>
</protein>